<protein>
    <recommendedName>
        <fullName>Uncharacterized protein CT_504</fullName>
    </recommendedName>
</protein>
<organism>
    <name type="scientific">Chlamydia trachomatis serovar D (strain ATCC VR-885 / DSM 19411 / UW-3/Cx)</name>
    <dbReference type="NCBI Taxonomy" id="272561"/>
    <lineage>
        <taxon>Bacteria</taxon>
        <taxon>Pseudomonadati</taxon>
        <taxon>Chlamydiota</taxon>
        <taxon>Chlamydiia</taxon>
        <taxon>Chlamydiales</taxon>
        <taxon>Chlamydiaceae</taxon>
        <taxon>Chlamydia/Chlamydophila group</taxon>
        <taxon>Chlamydia</taxon>
    </lineage>
</organism>
<keyword id="KW-1185">Reference proteome</keyword>
<reference key="1">
    <citation type="journal article" date="1998" name="Science">
        <title>Genome sequence of an obligate intracellular pathogen of humans: Chlamydia trachomatis.</title>
        <authorList>
            <person name="Stephens R.S."/>
            <person name="Kalman S."/>
            <person name="Lammel C.J."/>
            <person name="Fan J."/>
            <person name="Marathe R."/>
            <person name="Aravind L."/>
            <person name="Mitchell W.P."/>
            <person name="Olinger L."/>
            <person name="Tatusov R.L."/>
            <person name="Zhao Q."/>
            <person name="Koonin E.V."/>
            <person name="Davis R.W."/>
        </authorList>
    </citation>
    <scope>NUCLEOTIDE SEQUENCE [LARGE SCALE GENOMIC DNA]</scope>
    <source>
        <strain>ATCC VR-885 / DSM 19411 / UW-3/Cx</strain>
    </source>
</reference>
<feature type="chain" id="PRO_0000218405" description="Uncharacterized protein CT_504">
    <location>
        <begin position="1"/>
        <end position="288"/>
    </location>
</feature>
<feature type="region of interest" description="Disordered" evidence="1">
    <location>
        <begin position="126"/>
        <end position="227"/>
    </location>
</feature>
<feature type="region of interest" description="Disordered" evidence="1">
    <location>
        <begin position="258"/>
        <end position="288"/>
    </location>
</feature>
<feature type="compositionally biased region" description="Low complexity" evidence="1">
    <location>
        <begin position="126"/>
        <end position="136"/>
    </location>
</feature>
<feature type="compositionally biased region" description="Basic and acidic residues" evidence="1">
    <location>
        <begin position="143"/>
        <end position="152"/>
    </location>
</feature>
<feature type="compositionally biased region" description="Basic residues" evidence="1">
    <location>
        <begin position="153"/>
        <end position="162"/>
    </location>
</feature>
<feature type="compositionally biased region" description="Acidic residues" evidence="1">
    <location>
        <begin position="180"/>
        <end position="194"/>
    </location>
</feature>
<feature type="compositionally biased region" description="Basic and acidic residues" evidence="1">
    <location>
        <begin position="278"/>
        <end position="288"/>
    </location>
</feature>
<accession>O84512</accession>
<dbReference type="EMBL" id="AE001273">
    <property type="protein sequence ID" value="AAC68105.1"/>
    <property type="molecule type" value="Genomic_DNA"/>
</dbReference>
<dbReference type="PIR" id="F71504">
    <property type="entry name" value="F71504"/>
</dbReference>
<dbReference type="RefSeq" id="NP_220019.1">
    <property type="nucleotide sequence ID" value="NC_000117.1"/>
</dbReference>
<dbReference type="SMR" id="O84512"/>
<dbReference type="STRING" id="272561.CT_504"/>
<dbReference type="EnsemblBacteria" id="AAC68105">
    <property type="protein sequence ID" value="AAC68105"/>
    <property type="gene ID" value="CT_504"/>
</dbReference>
<dbReference type="GeneID" id="884290"/>
<dbReference type="KEGG" id="ctr:CT_504"/>
<dbReference type="PATRIC" id="fig|272561.5.peg.548"/>
<dbReference type="HOGENOM" id="CLU_060729_0_0_0"/>
<dbReference type="InParanoid" id="O84512"/>
<dbReference type="OrthoDB" id="19154at2"/>
<dbReference type="Proteomes" id="UP000000431">
    <property type="component" value="Chromosome"/>
</dbReference>
<dbReference type="InterPro" id="IPR054977">
    <property type="entry name" value="GrgA_tf"/>
</dbReference>
<dbReference type="NCBIfam" id="NF045799">
    <property type="entry name" value="GrgA"/>
    <property type="match status" value="1"/>
</dbReference>
<comment type="similarity">
    <text evidence="2">Belongs to the chlamydial CPn_0623/CT_504/TC_0791 family.</text>
</comment>
<gene>
    <name type="ordered locus">CT_504</name>
</gene>
<sequence length="288" mass="32191">MYFTRDPVIETVITSREGYKLSIRNSKHLSQDPFVVEAIEVVRLGETSFFRNCDHSKPFLLPASDYEVMEIRDAKINLKAVGLDRGVKIVGSREALLKMPKVAPIVSVSEDNTIVSEEEVVADSTVAAPASTPVAPMSKKERRKEFKNEKWKDKKKQGRRRNSKEIADAVGSSQEMIDTVAEECLQESSSEEGDFSERRFSLIPPPTRLISDGPEEPEEESQPVTSVDLNESLNALVSESCNVIESILADEDTVVFTKEKDQTAEESQEQPSLSLEETLVHDRISSEE</sequence>
<evidence type="ECO:0000256" key="1">
    <source>
        <dbReference type="SAM" id="MobiDB-lite"/>
    </source>
</evidence>
<evidence type="ECO:0000305" key="2"/>
<proteinExistence type="inferred from homology"/>
<name>Y504_CHLTR</name>